<name>EIF3H_SCLS1</name>
<feature type="chain" id="PRO_0000366899" description="Eukaryotic translation initiation factor 3 subunit H">
    <location>
        <begin position="1"/>
        <end position="367"/>
    </location>
</feature>
<feature type="domain" description="MPN" evidence="2">
    <location>
        <begin position="14"/>
        <end position="166"/>
    </location>
</feature>
<sequence length="367" mass="41073">MADTTSKEVPLHSVQVEALVVMKIVKACAATYPTTATGSIVGMDSNGTLQITNSFPFPTADVAASDSHPNDHMAASNIAAAAPRSKANIVYQSEMIKMLKEVNVDANNVGWYTSANMGNFINTSLIENQFFYQKEPNERTVALVHDVSRSAQGALSLRAFRLSPNFMTAYKEGKFTTENMQKSKLTYKDILVELPIIVHNSHLLTSFLHQMPVELPKKELDFPASLADLTRNTPPTPLYPNLESLDLSIDPYLERTCDMLLDSIETHYTELNNFQYFQRQLTREQAKVTAWKTKRAAENASRATQKLAPLPEDEWERLFKLPTEPSRLEGMLNARQVDQYSRQVDGFTASITGKMFAVKSNLLPEQS</sequence>
<evidence type="ECO:0000255" key="1">
    <source>
        <dbReference type="HAMAP-Rule" id="MF_03007"/>
    </source>
</evidence>
<evidence type="ECO:0000255" key="2">
    <source>
        <dbReference type="PROSITE-ProRule" id="PRU01182"/>
    </source>
</evidence>
<comment type="function">
    <text evidence="1">Component of the eukaryotic translation initiation factor 3 (eIF-3) complex, which is involved in protein synthesis of a specialized repertoire of mRNAs and, together with other initiation factors, stimulates binding of mRNA and methionyl-tRNAi to the 40S ribosome. The eIF-3 complex specifically targets and initiates translation of a subset of mRNAs involved in cell proliferation.</text>
</comment>
<comment type="subunit">
    <text evidence="1">Component of the eukaryotic translation initiation factor 3 (eIF-3) complex.</text>
</comment>
<comment type="subcellular location">
    <subcellularLocation>
        <location evidence="1">Cytoplasm</location>
    </subcellularLocation>
</comment>
<comment type="similarity">
    <text evidence="1">Belongs to the eIF-3 subunit H family.</text>
</comment>
<dbReference type="EMBL" id="CH476622">
    <property type="protein sequence ID" value="EDN96265.1"/>
    <property type="molecule type" value="Genomic_DNA"/>
</dbReference>
<dbReference type="RefSeq" id="XP_001596997.1">
    <property type="nucleotide sequence ID" value="XM_001596947.1"/>
</dbReference>
<dbReference type="SMR" id="A7E7B3"/>
<dbReference type="STRING" id="665079.A7E7B3"/>
<dbReference type="EnsemblFungi" id="EDN96265">
    <property type="protein sequence ID" value="EDN96265"/>
    <property type="gene ID" value="SS1G_01190"/>
</dbReference>
<dbReference type="GeneID" id="5494030"/>
<dbReference type="KEGG" id="ssl:SS1G_01190"/>
<dbReference type="VEuPathDB" id="FungiDB:sscle_01g010690"/>
<dbReference type="eggNOG" id="KOG1560">
    <property type="taxonomic scope" value="Eukaryota"/>
</dbReference>
<dbReference type="HOGENOM" id="CLU_044094_1_0_1"/>
<dbReference type="InParanoid" id="A7E7B3"/>
<dbReference type="OMA" id="WYQSTYF"/>
<dbReference type="OrthoDB" id="10265695at2759"/>
<dbReference type="Proteomes" id="UP000001312">
    <property type="component" value="Unassembled WGS sequence"/>
</dbReference>
<dbReference type="GO" id="GO:0016282">
    <property type="term" value="C:eukaryotic 43S preinitiation complex"/>
    <property type="evidence" value="ECO:0000318"/>
    <property type="project" value="GO_Central"/>
</dbReference>
<dbReference type="GO" id="GO:0033290">
    <property type="term" value="C:eukaryotic 48S preinitiation complex"/>
    <property type="evidence" value="ECO:0007669"/>
    <property type="project" value="UniProtKB-UniRule"/>
</dbReference>
<dbReference type="GO" id="GO:0005852">
    <property type="term" value="C:eukaryotic translation initiation factor 3 complex"/>
    <property type="evidence" value="ECO:0000318"/>
    <property type="project" value="GO_Central"/>
</dbReference>
<dbReference type="GO" id="GO:0008237">
    <property type="term" value="F:metallopeptidase activity"/>
    <property type="evidence" value="ECO:0000318"/>
    <property type="project" value="GO_Central"/>
</dbReference>
<dbReference type="GO" id="GO:0003743">
    <property type="term" value="F:translation initiation factor activity"/>
    <property type="evidence" value="ECO:0007669"/>
    <property type="project" value="UniProtKB-UniRule"/>
</dbReference>
<dbReference type="GO" id="GO:0001732">
    <property type="term" value="P:formation of cytoplasmic translation initiation complex"/>
    <property type="evidence" value="ECO:0007669"/>
    <property type="project" value="UniProtKB-UniRule"/>
</dbReference>
<dbReference type="GO" id="GO:0006413">
    <property type="term" value="P:translational initiation"/>
    <property type="evidence" value="ECO:0000318"/>
    <property type="project" value="GO_Central"/>
</dbReference>
<dbReference type="CDD" id="cd08065">
    <property type="entry name" value="MPN_eIF3h"/>
    <property type="match status" value="1"/>
</dbReference>
<dbReference type="FunFam" id="3.40.140.10:FF:000052">
    <property type="entry name" value="Eukaryotic translation initiation factor 3 subunit H"/>
    <property type="match status" value="1"/>
</dbReference>
<dbReference type="Gene3D" id="3.40.140.10">
    <property type="entry name" value="Cytidine Deaminase, domain 2"/>
    <property type="match status" value="1"/>
</dbReference>
<dbReference type="HAMAP" id="MF_03007">
    <property type="entry name" value="eIF3h"/>
    <property type="match status" value="1"/>
</dbReference>
<dbReference type="InterPro" id="IPR027524">
    <property type="entry name" value="eIF3h"/>
</dbReference>
<dbReference type="InterPro" id="IPR045810">
    <property type="entry name" value="eIF3h_C"/>
</dbReference>
<dbReference type="InterPro" id="IPR000555">
    <property type="entry name" value="JAMM/MPN+_dom"/>
</dbReference>
<dbReference type="InterPro" id="IPR050242">
    <property type="entry name" value="JAMM_MPN+_peptidase_M67A"/>
</dbReference>
<dbReference type="InterPro" id="IPR037518">
    <property type="entry name" value="MPN"/>
</dbReference>
<dbReference type="PANTHER" id="PTHR10410">
    <property type="entry name" value="EUKARYOTIC TRANSLATION INITIATION FACTOR 3 -RELATED"/>
    <property type="match status" value="1"/>
</dbReference>
<dbReference type="Pfam" id="PF19445">
    <property type="entry name" value="eIF3h_C"/>
    <property type="match status" value="1"/>
</dbReference>
<dbReference type="Pfam" id="PF01398">
    <property type="entry name" value="JAB"/>
    <property type="match status" value="1"/>
</dbReference>
<dbReference type="SMART" id="SM00232">
    <property type="entry name" value="JAB_MPN"/>
    <property type="match status" value="1"/>
</dbReference>
<dbReference type="PROSITE" id="PS50249">
    <property type="entry name" value="MPN"/>
    <property type="match status" value="1"/>
</dbReference>
<keyword id="KW-0963">Cytoplasm</keyword>
<keyword id="KW-0396">Initiation factor</keyword>
<keyword id="KW-0648">Protein biosynthesis</keyword>
<keyword id="KW-1185">Reference proteome</keyword>
<gene>
    <name type="ORF">SS1G_01190</name>
</gene>
<proteinExistence type="inferred from homology"/>
<accession>A7E7B3</accession>
<reference key="1">
    <citation type="journal article" date="2011" name="PLoS Genet.">
        <title>Genomic analysis of the necrotrophic fungal pathogens Sclerotinia sclerotiorum and Botrytis cinerea.</title>
        <authorList>
            <person name="Amselem J."/>
            <person name="Cuomo C.A."/>
            <person name="van Kan J.A.L."/>
            <person name="Viaud M."/>
            <person name="Benito E.P."/>
            <person name="Couloux A."/>
            <person name="Coutinho P.M."/>
            <person name="de Vries R.P."/>
            <person name="Dyer P.S."/>
            <person name="Fillinger S."/>
            <person name="Fournier E."/>
            <person name="Gout L."/>
            <person name="Hahn M."/>
            <person name="Kohn L."/>
            <person name="Lapalu N."/>
            <person name="Plummer K.M."/>
            <person name="Pradier J.-M."/>
            <person name="Quevillon E."/>
            <person name="Sharon A."/>
            <person name="Simon A."/>
            <person name="ten Have A."/>
            <person name="Tudzynski B."/>
            <person name="Tudzynski P."/>
            <person name="Wincker P."/>
            <person name="Andrew M."/>
            <person name="Anthouard V."/>
            <person name="Beever R.E."/>
            <person name="Beffa R."/>
            <person name="Benoit I."/>
            <person name="Bouzid O."/>
            <person name="Brault B."/>
            <person name="Chen Z."/>
            <person name="Choquer M."/>
            <person name="Collemare J."/>
            <person name="Cotton P."/>
            <person name="Danchin E.G."/>
            <person name="Da Silva C."/>
            <person name="Gautier A."/>
            <person name="Giraud C."/>
            <person name="Giraud T."/>
            <person name="Gonzalez C."/>
            <person name="Grossetete S."/>
            <person name="Gueldener U."/>
            <person name="Henrissat B."/>
            <person name="Howlett B.J."/>
            <person name="Kodira C."/>
            <person name="Kretschmer M."/>
            <person name="Lappartient A."/>
            <person name="Leroch M."/>
            <person name="Levis C."/>
            <person name="Mauceli E."/>
            <person name="Neuveglise C."/>
            <person name="Oeser B."/>
            <person name="Pearson M."/>
            <person name="Poulain J."/>
            <person name="Poussereau N."/>
            <person name="Quesneville H."/>
            <person name="Rascle C."/>
            <person name="Schumacher J."/>
            <person name="Segurens B."/>
            <person name="Sexton A."/>
            <person name="Silva E."/>
            <person name="Sirven C."/>
            <person name="Soanes D.M."/>
            <person name="Talbot N.J."/>
            <person name="Templeton M."/>
            <person name="Yandava C."/>
            <person name="Yarden O."/>
            <person name="Zeng Q."/>
            <person name="Rollins J.A."/>
            <person name="Lebrun M.-H."/>
            <person name="Dickman M."/>
        </authorList>
    </citation>
    <scope>NUCLEOTIDE SEQUENCE [LARGE SCALE GENOMIC DNA]</scope>
    <source>
        <strain>ATCC 18683 / 1980 / Ss-1</strain>
    </source>
</reference>
<protein>
    <recommendedName>
        <fullName evidence="1">Eukaryotic translation initiation factor 3 subunit H</fullName>
        <shortName evidence="1">eIF3h</shortName>
    </recommendedName>
</protein>
<organism>
    <name type="scientific">Sclerotinia sclerotiorum (strain ATCC 18683 / 1980 / Ss-1)</name>
    <name type="common">White mold</name>
    <name type="synonym">Whetzelinia sclerotiorum</name>
    <dbReference type="NCBI Taxonomy" id="665079"/>
    <lineage>
        <taxon>Eukaryota</taxon>
        <taxon>Fungi</taxon>
        <taxon>Dikarya</taxon>
        <taxon>Ascomycota</taxon>
        <taxon>Pezizomycotina</taxon>
        <taxon>Leotiomycetes</taxon>
        <taxon>Helotiales</taxon>
        <taxon>Sclerotiniaceae</taxon>
        <taxon>Sclerotinia</taxon>
    </lineage>
</organism>